<comment type="function">
    <text evidence="1">Has both ATPase and helicase activities. Unwinds DNA duplexes with 3' to 5' polarity with respect to the bound strand and initiates unwinding most effectively when a single-stranded region is present. Involved in the post-incision events of nucleotide excision repair and methyl-directed mismatch repair (By similarity).</text>
</comment>
<comment type="catalytic activity">
    <reaction>
        <text>Couples ATP hydrolysis with the unwinding of duplex DNA by translocating in the 3'-5' direction.</text>
        <dbReference type="EC" id="5.6.2.4"/>
    </reaction>
</comment>
<comment type="catalytic activity">
    <reaction>
        <text>ATP + H2O = ADP + phosphate + H(+)</text>
        <dbReference type="Rhea" id="RHEA:13065"/>
        <dbReference type="ChEBI" id="CHEBI:15377"/>
        <dbReference type="ChEBI" id="CHEBI:15378"/>
        <dbReference type="ChEBI" id="CHEBI:30616"/>
        <dbReference type="ChEBI" id="CHEBI:43474"/>
        <dbReference type="ChEBI" id="CHEBI:456216"/>
        <dbReference type="EC" id="5.6.2.4"/>
    </reaction>
</comment>
<comment type="similarity">
    <text evidence="4">Belongs to the helicase family. UvrD subfamily.</text>
</comment>
<evidence type="ECO:0000250" key="1"/>
<evidence type="ECO:0000255" key="2">
    <source>
        <dbReference type="PROSITE-ProRule" id="PRU00560"/>
    </source>
</evidence>
<evidence type="ECO:0000255" key="3">
    <source>
        <dbReference type="PROSITE-ProRule" id="PRU00617"/>
    </source>
</evidence>
<evidence type="ECO:0000305" key="4"/>
<organism>
    <name type="scientific">Mycoplasma pneumoniae (strain ATCC 29342 / M129 / Subtype 1)</name>
    <name type="common">Mycoplasmoides pneumoniae</name>
    <dbReference type="NCBI Taxonomy" id="272634"/>
    <lineage>
        <taxon>Bacteria</taxon>
        <taxon>Bacillati</taxon>
        <taxon>Mycoplasmatota</taxon>
        <taxon>Mycoplasmoidales</taxon>
        <taxon>Mycoplasmoidaceae</taxon>
        <taxon>Mycoplasmoides</taxon>
    </lineage>
</organism>
<proteinExistence type="inferred from homology"/>
<reference key="1">
    <citation type="journal article" date="1996" name="Nucleic Acids Res.">
        <title>Complete sequence analysis of the genome of the bacterium Mycoplasma pneumoniae.</title>
        <authorList>
            <person name="Himmelreich R."/>
            <person name="Hilbert H."/>
            <person name="Plagens H."/>
            <person name="Pirkl E."/>
            <person name="Li B.-C."/>
            <person name="Herrmann R."/>
        </authorList>
    </citation>
    <scope>NUCLEOTIDE SEQUENCE [LARGE SCALE GENOMIC DNA]</scope>
    <source>
        <strain>ATCC 29342 / M129 / Subtype 1</strain>
    </source>
</reference>
<accession>P75437</accession>
<keyword id="KW-0067">ATP-binding</keyword>
<keyword id="KW-0227">DNA damage</keyword>
<keyword id="KW-0234">DNA repair</keyword>
<keyword id="KW-0235">DNA replication</keyword>
<keyword id="KW-0238">DNA-binding</keyword>
<keyword id="KW-0347">Helicase</keyword>
<keyword id="KW-0378">Hydrolase</keyword>
<keyword id="KW-0413">Isomerase</keyword>
<keyword id="KW-0547">Nucleotide-binding</keyword>
<keyword id="KW-1185">Reference proteome</keyword>
<name>UVRD_MYCPN</name>
<feature type="chain" id="PRO_0000102077" description="Probable DNA helicase II homolog">
    <location>
        <begin position="1"/>
        <end position="715"/>
    </location>
</feature>
<feature type="domain" description="UvrD-like helicase ATP-binding" evidence="2">
    <location>
        <begin position="7"/>
        <end position="295"/>
    </location>
</feature>
<feature type="domain" description="UvrD-like helicase C-terminal" evidence="3">
    <location>
        <begin position="296"/>
        <end position="554"/>
    </location>
</feature>
<feature type="binding site" evidence="2">
    <location>
        <begin position="31"/>
        <end position="36"/>
    </location>
    <ligand>
        <name>ATP</name>
        <dbReference type="ChEBI" id="CHEBI:30616"/>
    </ligand>
</feature>
<feature type="binding site" evidence="1">
    <location>
        <position position="293"/>
    </location>
    <ligand>
        <name>ATP</name>
        <dbReference type="ChEBI" id="CHEBI:30616"/>
    </ligand>
</feature>
<gene>
    <name type="primary">uvrD</name>
    <name type="ordered locus">MPN_341</name>
    <name type="ORF">MP495</name>
</gene>
<dbReference type="EC" id="5.6.2.4"/>
<dbReference type="EMBL" id="U00089">
    <property type="protein sequence ID" value="AAB96143.1"/>
    <property type="molecule type" value="Genomic_DNA"/>
</dbReference>
<dbReference type="PIR" id="S73821">
    <property type="entry name" value="S73821"/>
</dbReference>
<dbReference type="RefSeq" id="NP_110029.1">
    <property type="nucleotide sequence ID" value="NC_000912.1"/>
</dbReference>
<dbReference type="RefSeq" id="WP_010874697.1">
    <property type="nucleotide sequence ID" value="NZ_OU342337.1"/>
</dbReference>
<dbReference type="SMR" id="P75437"/>
<dbReference type="IntAct" id="P75437">
    <property type="interactions" value="2"/>
</dbReference>
<dbReference type="STRING" id="272634.MPN_341"/>
<dbReference type="EnsemblBacteria" id="AAB96143">
    <property type="protein sequence ID" value="AAB96143"/>
    <property type="gene ID" value="MPN_341"/>
</dbReference>
<dbReference type="KEGG" id="mpn:MPN_341"/>
<dbReference type="PATRIC" id="fig|272634.6.peg.365"/>
<dbReference type="HOGENOM" id="CLU_004585_6_1_14"/>
<dbReference type="OrthoDB" id="9810135at2"/>
<dbReference type="BioCyc" id="MPNE272634:G1GJ3-538-MONOMER"/>
<dbReference type="Proteomes" id="UP000000808">
    <property type="component" value="Chromosome"/>
</dbReference>
<dbReference type="GO" id="GO:0005829">
    <property type="term" value="C:cytosol"/>
    <property type="evidence" value="ECO:0007669"/>
    <property type="project" value="TreeGrafter"/>
</dbReference>
<dbReference type="GO" id="GO:0033202">
    <property type="term" value="C:DNA helicase complex"/>
    <property type="evidence" value="ECO:0007669"/>
    <property type="project" value="TreeGrafter"/>
</dbReference>
<dbReference type="GO" id="GO:0043138">
    <property type="term" value="F:3'-5' DNA helicase activity"/>
    <property type="evidence" value="ECO:0007669"/>
    <property type="project" value="TreeGrafter"/>
</dbReference>
<dbReference type="GO" id="GO:0005524">
    <property type="term" value="F:ATP binding"/>
    <property type="evidence" value="ECO:0007669"/>
    <property type="project" value="UniProtKB-KW"/>
</dbReference>
<dbReference type="GO" id="GO:0016887">
    <property type="term" value="F:ATP hydrolysis activity"/>
    <property type="evidence" value="ECO:0007669"/>
    <property type="project" value="RHEA"/>
</dbReference>
<dbReference type="GO" id="GO:0003677">
    <property type="term" value="F:DNA binding"/>
    <property type="evidence" value="ECO:0007669"/>
    <property type="project" value="UniProtKB-KW"/>
</dbReference>
<dbReference type="GO" id="GO:0006260">
    <property type="term" value="P:DNA replication"/>
    <property type="evidence" value="ECO:0007669"/>
    <property type="project" value="UniProtKB-KW"/>
</dbReference>
<dbReference type="GO" id="GO:0000725">
    <property type="term" value="P:recombinational repair"/>
    <property type="evidence" value="ECO:0007669"/>
    <property type="project" value="TreeGrafter"/>
</dbReference>
<dbReference type="CDD" id="cd17932">
    <property type="entry name" value="DEXQc_UvrD"/>
    <property type="match status" value="1"/>
</dbReference>
<dbReference type="Gene3D" id="1.10.10.160">
    <property type="match status" value="1"/>
</dbReference>
<dbReference type="Gene3D" id="3.40.50.300">
    <property type="entry name" value="P-loop containing nucleotide triphosphate hydrolases"/>
    <property type="match status" value="2"/>
</dbReference>
<dbReference type="Gene3D" id="1.10.486.10">
    <property type="entry name" value="PCRA, domain 4"/>
    <property type="match status" value="1"/>
</dbReference>
<dbReference type="InterPro" id="IPR013986">
    <property type="entry name" value="DExx_box_DNA_helicase_dom_sf"/>
</dbReference>
<dbReference type="InterPro" id="IPR014017">
    <property type="entry name" value="DNA_helicase_UvrD-like_C"/>
</dbReference>
<dbReference type="InterPro" id="IPR000212">
    <property type="entry name" value="DNA_helicase_UvrD/REP"/>
</dbReference>
<dbReference type="InterPro" id="IPR027417">
    <property type="entry name" value="P-loop_NTPase"/>
</dbReference>
<dbReference type="InterPro" id="IPR014016">
    <property type="entry name" value="UvrD-like_ATP-bd"/>
</dbReference>
<dbReference type="PANTHER" id="PTHR11070:SF2">
    <property type="entry name" value="ATP-DEPENDENT DNA HELICASE SRS2"/>
    <property type="match status" value="1"/>
</dbReference>
<dbReference type="PANTHER" id="PTHR11070">
    <property type="entry name" value="UVRD / RECB / PCRA DNA HELICASE FAMILY MEMBER"/>
    <property type="match status" value="1"/>
</dbReference>
<dbReference type="Pfam" id="PF00580">
    <property type="entry name" value="UvrD-helicase"/>
    <property type="match status" value="1"/>
</dbReference>
<dbReference type="Pfam" id="PF13361">
    <property type="entry name" value="UvrD_C"/>
    <property type="match status" value="2"/>
</dbReference>
<dbReference type="SUPFAM" id="SSF52540">
    <property type="entry name" value="P-loop containing nucleoside triphosphate hydrolases"/>
    <property type="match status" value="1"/>
</dbReference>
<dbReference type="PROSITE" id="PS51198">
    <property type="entry name" value="UVRD_HELICASE_ATP_BIND"/>
    <property type="match status" value="1"/>
</dbReference>
<dbReference type="PROSITE" id="PS51217">
    <property type="entry name" value="UVRD_HELICASE_CTER"/>
    <property type="match status" value="1"/>
</dbReference>
<sequence length="715" mass="83497">MAFNISTQLNKEQRAAVTCGKGVNIVYSGAGTGKTTIISQRFAYLFNQKRINPSNILALTYTRKAASEMKQRILELLPEKYHKDVNIYTFHSFCSRFLREEGQKNFVIDDDLSNFLKDFLKESELKSQKVLQIIDGFKNAYFDFDTNSLKDDERLVELCEFHLDPQERNFQLFKETAIAAFVEYEKGKQQNNKIDFADLLIKTCTLLSKDHKLLRKWSKKFQYILGDEFQDTNQIQYELIKMLASHHQNLFLVGDNNQMIYRWRGAVSDIIDSLKSDFKVRPENEFYITQNYRCDQNILTVANSILGTIYAKENQPDSTKGFLFSAIKSNRLPVYFQASSVEGQHSWIINKIKNLHKNHGIQYKDMAILFRTNRNMDSMTEALEADGSIPLKQNKGFFKQLETFKKVLVALITRSNYDIKLALKSLRVWPNVLNKSLTVNEQVNLDKILQNLEQAIFLDEHTRGELTEAAKVFTRLIKFVEEQQFEALLAFTFEALNTDQFVCNFIFRTLQKLQTENKNFTITDFINELRFQQDELKQSKDNVINLITVHSAKGLEFEAVFIYGINQDNFPLKSKNQIIDLQRELDELRLFYVALTRAKKYLFLLSVYQMSGEIIYPSKFIRFINKEDRLEIATINHKVHQDDEFFDSSKTEDYQKKYLTENTDFVNGDSVSHRTYGKGVVVEVREDAVCVAFKNSKYGQRWIVKNHRDLVKAVY</sequence>
<protein>
    <recommendedName>
        <fullName>Probable DNA helicase II homolog</fullName>
        <ecNumber>5.6.2.4</ecNumber>
    </recommendedName>
    <alternativeName>
        <fullName evidence="4">DNA 3'-5' helicase II</fullName>
    </alternativeName>
</protein>